<dbReference type="EMBL" id="BC054917">
    <property type="protein sequence ID" value="AAH54917.1"/>
    <property type="molecule type" value="mRNA"/>
</dbReference>
<dbReference type="RefSeq" id="NP_956731.1">
    <property type="nucleotide sequence ID" value="NM_200437.1"/>
</dbReference>
<dbReference type="FunCoup" id="Q7SYC7">
    <property type="interactions" value="998"/>
</dbReference>
<dbReference type="STRING" id="7955.ENSDARP00000065103"/>
<dbReference type="PaxDb" id="7955-ENSDARP00000065103"/>
<dbReference type="Ensembl" id="ENSDART00000065104">
    <property type="protein sequence ID" value="ENSDARP00000065103"/>
    <property type="gene ID" value="ENSDARG00000044327"/>
</dbReference>
<dbReference type="GeneID" id="393409"/>
<dbReference type="KEGG" id="dre:393409"/>
<dbReference type="AGR" id="ZFIN:ZDB-GENE-040426-1167"/>
<dbReference type="CTD" id="393409"/>
<dbReference type="ZFIN" id="ZDB-GENE-040426-1167">
    <property type="gene designation" value="tmem185"/>
</dbReference>
<dbReference type="eggNOG" id="KOG3879">
    <property type="taxonomic scope" value="Eukaryota"/>
</dbReference>
<dbReference type="HOGENOM" id="CLU_053027_0_0_1"/>
<dbReference type="InParanoid" id="Q7SYC7"/>
<dbReference type="OMA" id="HEFGKHD"/>
<dbReference type="OrthoDB" id="72976at2759"/>
<dbReference type="PhylomeDB" id="Q7SYC7"/>
<dbReference type="TreeFam" id="TF313829"/>
<dbReference type="PRO" id="PR:Q7SYC7"/>
<dbReference type="Proteomes" id="UP000000437">
    <property type="component" value="Chromosome 21"/>
</dbReference>
<dbReference type="Bgee" id="ENSDARG00000044327">
    <property type="expression patterns" value="Expressed in pharyngeal gill and 19 other cell types or tissues"/>
</dbReference>
<dbReference type="GO" id="GO:0016020">
    <property type="term" value="C:membrane"/>
    <property type="evidence" value="ECO:0007669"/>
    <property type="project" value="UniProtKB-SubCell"/>
</dbReference>
<dbReference type="InterPro" id="IPR019396">
    <property type="entry name" value="TM_Fragile-X-F-assoc"/>
</dbReference>
<dbReference type="PANTHER" id="PTHR13568">
    <property type="entry name" value="FAM11A, B PROTEIN"/>
    <property type="match status" value="1"/>
</dbReference>
<dbReference type="PANTHER" id="PTHR13568:SF6">
    <property type="entry name" value="TRANSMEMBRANE PROTEIN 185A"/>
    <property type="match status" value="1"/>
</dbReference>
<dbReference type="Pfam" id="PF10269">
    <property type="entry name" value="Tmemb_185A"/>
    <property type="match status" value="1"/>
</dbReference>
<sequence length="351" mass="40684">MNLRGVFQDFNPSKFLIYACLLLFSVLLSLRLDGIIQWSYWAVFAPIWLWKLMVIIGASVGTGVWAHNPQYRAEGETCVEFKAMLIAVGIHLLLLTFEVLVCERVERASIPYWLLVFMPLFFVSPVSVAACVWGFRHDRSLELEILCSVNILQFIFIALKLDGIISWPWLVVCVPLWILMSFLCLVVLYYIVWSVLFLRSMDVIAEQRRTHITMAISWMTIVVPLLTFEILLVHKLDNHYSPNYVPVFVPLWVSLVTLMVTTFGQKGGNHWWFGIRKDFCQFLLELFPFLREYGNISYDLHHEDSDMSEELPIHEVPKIPTMFRKKTGVVITQSPGKYFVPPPKLCIDMPD</sequence>
<reference key="1">
    <citation type="submission" date="2003-07" db="EMBL/GenBank/DDBJ databases">
        <authorList>
            <consortium name="NIH - Zebrafish Gene Collection (ZGC) project"/>
        </authorList>
    </citation>
    <scope>NUCLEOTIDE SEQUENCE [LARGE SCALE MRNA]</scope>
</reference>
<organism>
    <name type="scientific">Danio rerio</name>
    <name type="common">Zebrafish</name>
    <name type="synonym">Brachydanio rerio</name>
    <dbReference type="NCBI Taxonomy" id="7955"/>
    <lineage>
        <taxon>Eukaryota</taxon>
        <taxon>Metazoa</taxon>
        <taxon>Chordata</taxon>
        <taxon>Craniata</taxon>
        <taxon>Vertebrata</taxon>
        <taxon>Euteleostomi</taxon>
        <taxon>Actinopterygii</taxon>
        <taxon>Neopterygii</taxon>
        <taxon>Teleostei</taxon>
        <taxon>Ostariophysi</taxon>
        <taxon>Cypriniformes</taxon>
        <taxon>Danionidae</taxon>
        <taxon>Danioninae</taxon>
        <taxon>Danio</taxon>
    </lineage>
</organism>
<name>T185L_DANRE</name>
<comment type="subcellular location">
    <subcellularLocation>
        <location evidence="2">Membrane</location>
        <topology evidence="2">Multi-pass membrane protein</topology>
    </subcellularLocation>
</comment>
<comment type="similarity">
    <text evidence="2">Belongs to the TMEM185 family.</text>
</comment>
<gene>
    <name type="ORF">zgc:63572</name>
</gene>
<feature type="chain" id="PRO_0000188011" description="Transmembrane protein 185-like">
    <location>
        <begin position="1"/>
        <end position="351"/>
    </location>
</feature>
<feature type="transmembrane region" description="Helical" evidence="1">
    <location>
        <begin position="16"/>
        <end position="36"/>
    </location>
</feature>
<feature type="transmembrane region" description="Helical" evidence="1">
    <location>
        <begin position="41"/>
        <end position="61"/>
    </location>
</feature>
<feature type="transmembrane region" description="Helical" evidence="1">
    <location>
        <begin position="81"/>
        <end position="101"/>
    </location>
</feature>
<feature type="transmembrane region" description="Helical" evidence="1">
    <location>
        <begin position="113"/>
        <end position="133"/>
    </location>
</feature>
<feature type="transmembrane region" description="Helical" evidence="1">
    <location>
        <begin position="154"/>
        <end position="174"/>
    </location>
</feature>
<feature type="transmembrane region" description="Helical" evidence="1">
    <location>
        <begin position="178"/>
        <end position="198"/>
    </location>
</feature>
<feature type="transmembrane region" description="Helical" evidence="1">
    <location>
        <begin position="212"/>
        <end position="232"/>
    </location>
</feature>
<feature type="transmembrane region" description="Helical" evidence="1">
    <location>
        <begin position="244"/>
        <end position="264"/>
    </location>
</feature>
<protein>
    <recommendedName>
        <fullName>Transmembrane protein 185-like</fullName>
    </recommendedName>
</protein>
<keyword id="KW-0472">Membrane</keyword>
<keyword id="KW-1185">Reference proteome</keyword>
<keyword id="KW-0812">Transmembrane</keyword>
<keyword id="KW-1133">Transmembrane helix</keyword>
<evidence type="ECO:0000255" key="1"/>
<evidence type="ECO:0000305" key="2"/>
<accession>Q7SYC7</accession>
<proteinExistence type="evidence at transcript level"/>